<sequence length="352" mass="40062">MFATPLRQPAAANHQTPKNSAGMDEHGKPYQYEITDHGYGKDAVKVLHVSRNGPVHAIQEFEVGTHLKLYSKKDYYQGNNSDIVATDSQKNTVYLLAKKHGIESPEKFALLLARHFINKYSHVEEAHVHVEAYPWQRVCQEETRTNVNGKCENGVQGNCDFSSIDNRSLHNHAFIFTPTALHYCDVVIRRTDPKQTVITGIKGLRVLKTTQSSFVNFVNDEFRSLPDQYDRIFSTVVDCSWEYSDTENLDFLRAWQTVKNIIIRNFAGDPQVGVSSPSVQHTLYLSERQVLDVLPQVSVISMTMPNKHYFNFDTKPFQKIAPGDNNEVFIPVDKPHGTIYAQLARKNINSHL</sequence>
<dbReference type="EC" id="1.7.3.3"/>
<dbReference type="EMBL" id="X51940">
    <property type="protein sequence ID" value="CAA36203.1"/>
    <property type="molecule type" value="Genomic_DNA"/>
</dbReference>
<dbReference type="EMBL" id="AE014134">
    <property type="protein sequence ID" value="AAF52555.1"/>
    <property type="molecule type" value="Genomic_DNA"/>
</dbReference>
<dbReference type="EMBL" id="BT024422">
    <property type="protein sequence ID" value="ABC86484.1"/>
    <property type="status" value="ALT_SEQ"/>
    <property type="molecule type" value="mRNA"/>
</dbReference>
<dbReference type="PIR" id="A35920">
    <property type="entry name" value="A35920"/>
</dbReference>
<dbReference type="RefSeq" id="NP_476779.1">
    <property type="nucleotide sequence ID" value="NM_057431.3"/>
</dbReference>
<dbReference type="SMR" id="P16163"/>
<dbReference type="BioGRID" id="60199">
    <property type="interactions" value="18"/>
</dbReference>
<dbReference type="DIP" id="DIP-20028N"/>
<dbReference type="FunCoup" id="P16163">
    <property type="interactions" value="215"/>
</dbReference>
<dbReference type="IntAct" id="P16163">
    <property type="interactions" value="15"/>
</dbReference>
<dbReference type="STRING" id="7227.FBpp0079109"/>
<dbReference type="PaxDb" id="7227-FBpp0079109"/>
<dbReference type="DNASU" id="34060"/>
<dbReference type="EnsemblMetazoa" id="FBtr0079486">
    <property type="protein sequence ID" value="FBpp0079109"/>
    <property type="gene ID" value="FBgn0003961"/>
</dbReference>
<dbReference type="GeneID" id="34060"/>
<dbReference type="KEGG" id="dme:Dmel_CG7171"/>
<dbReference type="AGR" id="FB:FBgn0003961"/>
<dbReference type="CTD" id="34060"/>
<dbReference type="FlyBase" id="FBgn0003961">
    <property type="gene designation" value="Uro"/>
</dbReference>
<dbReference type="VEuPathDB" id="VectorBase:FBgn0003961"/>
<dbReference type="eggNOG" id="KOG1599">
    <property type="taxonomic scope" value="Eukaryota"/>
</dbReference>
<dbReference type="GeneTree" id="ENSGT00940000153229"/>
<dbReference type="HOGENOM" id="CLU_048151_1_0_1"/>
<dbReference type="InParanoid" id="P16163"/>
<dbReference type="OMA" id="ATMYKMS"/>
<dbReference type="OrthoDB" id="9992118at2759"/>
<dbReference type="PhylomeDB" id="P16163"/>
<dbReference type="UniPathway" id="UPA00394">
    <property type="reaction ID" value="UER00650"/>
</dbReference>
<dbReference type="BioGRID-ORCS" id="34060">
    <property type="hits" value="0 hits in 1 CRISPR screen"/>
</dbReference>
<dbReference type="GenomeRNAi" id="34060"/>
<dbReference type="PRO" id="PR:P16163"/>
<dbReference type="Proteomes" id="UP000000803">
    <property type="component" value="Chromosome 2L"/>
</dbReference>
<dbReference type="Bgee" id="FBgn0003961">
    <property type="expression patterns" value="Expressed in adult Malpighian tubule (Drosophila) and 25 other cell types or tissues"/>
</dbReference>
<dbReference type="ExpressionAtlas" id="P16163">
    <property type="expression patterns" value="baseline and differential"/>
</dbReference>
<dbReference type="GO" id="GO:0005777">
    <property type="term" value="C:peroxisome"/>
    <property type="evidence" value="ECO:0000250"/>
    <property type="project" value="FlyBase"/>
</dbReference>
<dbReference type="GO" id="GO:0004846">
    <property type="term" value="F:urate oxidase activity"/>
    <property type="evidence" value="ECO:0000250"/>
    <property type="project" value="FlyBase"/>
</dbReference>
<dbReference type="GO" id="GO:0019428">
    <property type="term" value="P:allantoin biosynthetic process"/>
    <property type="evidence" value="ECO:0000304"/>
    <property type="project" value="FlyBase"/>
</dbReference>
<dbReference type="GO" id="GO:0006145">
    <property type="term" value="P:purine nucleobase catabolic process"/>
    <property type="evidence" value="ECO:0000318"/>
    <property type="project" value="GO_Central"/>
</dbReference>
<dbReference type="GO" id="GO:0019628">
    <property type="term" value="P:urate catabolic process"/>
    <property type="evidence" value="ECO:0000318"/>
    <property type="project" value="GO_Central"/>
</dbReference>
<dbReference type="CDD" id="cd00445">
    <property type="entry name" value="Uricase"/>
    <property type="match status" value="1"/>
</dbReference>
<dbReference type="FunFam" id="3.10.270.10:FF:000002">
    <property type="entry name" value="Uricase"/>
    <property type="match status" value="1"/>
</dbReference>
<dbReference type="Gene3D" id="3.10.270.10">
    <property type="entry name" value="Urate Oxidase"/>
    <property type="match status" value="1"/>
</dbReference>
<dbReference type="InterPro" id="IPR002042">
    <property type="entry name" value="Uricase"/>
</dbReference>
<dbReference type="InterPro" id="IPR019842">
    <property type="entry name" value="Uricase_CS"/>
</dbReference>
<dbReference type="NCBIfam" id="TIGR03383">
    <property type="entry name" value="urate_oxi"/>
    <property type="match status" value="1"/>
</dbReference>
<dbReference type="PANTHER" id="PTHR42874">
    <property type="entry name" value="URICASE"/>
    <property type="match status" value="1"/>
</dbReference>
<dbReference type="PANTHER" id="PTHR42874:SF1">
    <property type="entry name" value="URICASE"/>
    <property type="match status" value="1"/>
</dbReference>
<dbReference type="Pfam" id="PF01014">
    <property type="entry name" value="Uricase"/>
    <property type="match status" value="2"/>
</dbReference>
<dbReference type="PIRSF" id="PIRSF000241">
    <property type="entry name" value="Urate_oxidase"/>
    <property type="match status" value="1"/>
</dbReference>
<dbReference type="PRINTS" id="PR00093">
    <property type="entry name" value="URICASE"/>
</dbReference>
<dbReference type="SUPFAM" id="SSF55620">
    <property type="entry name" value="Tetrahydrobiopterin biosynthesis enzymes-like"/>
    <property type="match status" value="2"/>
</dbReference>
<dbReference type="PROSITE" id="PS00366">
    <property type="entry name" value="URICASE"/>
    <property type="match status" value="1"/>
</dbReference>
<reference key="1">
    <citation type="journal article" date="1990" name="Mol. Cell. Biol.">
        <title>Molecular characterization of the Drosophila melanogaster urate oxidase gene, an ecdysone-repressible gene expressed only in the Malpighian tubules.</title>
        <authorList>
            <person name="Wallrath L.L."/>
            <person name="Burnett J.B."/>
            <person name="Friedman T.B."/>
        </authorList>
    </citation>
    <scope>NUCLEOTIDE SEQUENCE [GENOMIC DNA]</scope>
    <scope>FUNCTION</scope>
    <scope>ACTIVITY REGULATION</scope>
    <scope>SUBCELLULAR LOCATION</scope>
    <scope>TISSUE SPECIFICITY</scope>
    <scope>DEVELOPMENTAL STAGE</scope>
    <source>
        <strain>Canton-S</strain>
        <tissue>Salivary gland</tissue>
    </source>
</reference>
<reference key="2">
    <citation type="journal article" date="2000" name="Science">
        <title>The genome sequence of Drosophila melanogaster.</title>
        <authorList>
            <person name="Adams M.D."/>
            <person name="Celniker S.E."/>
            <person name="Holt R.A."/>
            <person name="Evans C.A."/>
            <person name="Gocayne J.D."/>
            <person name="Amanatides P.G."/>
            <person name="Scherer S.E."/>
            <person name="Li P.W."/>
            <person name="Hoskins R.A."/>
            <person name="Galle R.F."/>
            <person name="George R.A."/>
            <person name="Lewis S.E."/>
            <person name="Richards S."/>
            <person name="Ashburner M."/>
            <person name="Henderson S.N."/>
            <person name="Sutton G.G."/>
            <person name="Wortman J.R."/>
            <person name="Yandell M.D."/>
            <person name="Zhang Q."/>
            <person name="Chen L.X."/>
            <person name="Brandon R.C."/>
            <person name="Rogers Y.-H.C."/>
            <person name="Blazej R.G."/>
            <person name="Champe M."/>
            <person name="Pfeiffer B.D."/>
            <person name="Wan K.H."/>
            <person name="Doyle C."/>
            <person name="Baxter E.G."/>
            <person name="Helt G."/>
            <person name="Nelson C.R."/>
            <person name="Miklos G.L.G."/>
            <person name="Abril J.F."/>
            <person name="Agbayani A."/>
            <person name="An H.-J."/>
            <person name="Andrews-Pfannkoch C."/>
            <person name="Baldwin D."/>
            <person name="Ballew R.M."/>
            <person name="Basu A."/>
            <person name="Baxendale J."/>
            <person name="Bayraktaroglu L."/>
            <person name="Beasley E.M."/>
            <person name="Beeson K.Y."/>
            <person name="Benos P.V."/>
            <person name="Berman B.P."/>
            <person name="Bhandari D."/>
            <person name="Bolshakov S."/>
            <person name="Borkova D."/>
            <person name="Botchan M.R."/>
            <person name="Bouck J."/>
            <person name="Brokstein P."/>
            <person name="Brottier P."/>
            <person name="Burtis K.C."/>
            <person name="Busam D.A."/>
            <person name="Butler H."/>
            <person name="Cadieu E."/>
            <person name="Center A."/>
            <person name="Chandra I."/>
            <person name="Cherry J.M."/>
            <person name="Cawley S."/>
            <person name="Dahlke C."/>
            <person name="Davenport L.B."/>
            <person name="Davies P."/>
            <person name="de Pablos B."/>
            <person name="Delcher A."/>
            <person name="Deng Z."/>
            <person name="Mays A.D."/>
            <person name="Dew I."/>
            <person name="Dietz S.M."/>
            <person name="Dodson K."/>
            <person name="Doup L.E."/>
            <person name="Downes M."/>
            <person name="Dugan-Rocha S."/>
            <person name="Dunkov B.C."/>
            <person name="Dunn P."/>
            <person name="Durbin K.J."/>
            <person name="Evangelista C.C."/>
            <person name="Ferraz C."/>
            <person name="Ferriera S."/>
            <person name="Fleischmann W."/>
            <person name="Fosler C."/>
            <person name="Gabrielian A.E."/>
            <person name="Garg N.S."/>
            <person name="Gelbart W.M."/>
            <person name="Glasser K."/>
            <person name="Glodek A."/>
            <person name="Gong F."/>
            <person name="Gorrell J.H."/>
            <person name="Gu Z."/>
            <person name="Guan P."/>
            <person name="Harris M."/>
            <person name="Harris N.L."/>
            <person name="Harvey D.A."/>
            <person name="Heiman T.J."/>
            <person name="Hernandez J.R."/>
            <person name="Houck J."/>
            <person name="Hostin D."/>
            <person name="Houston K.A."/>
            <person name="Howland T.J."/>
            <person name="Wei M.-H."/>
            <person name="Ibegwam C."/>
            <person name="Jalali M."/>
            <person name="Kalush F."/>
            <person name="Karpen G.H."/>
            <person name="Ke Z."/>
            <person name="Kennison J.A."/>
            <person name="Ketchum K.A."/>
            <person name="Kimmel B.E."/>
            <person name="Kodira C.D."/>
            <person name="Kraft C.L."/>
            <person name="Kravitz S."/>
            <person name="Kulp D."/>
            <person name="Lai Z."/>
            <person name="Lasko P."/>
            <person name="Lei Y."/>
            <person name="Levitsky A.A."/>
            <person name="Li J.H."/>
            <person name="Li Z."/>
            <person name="Liang Y."/>
            <person name="Lin X."/>
            <person name="Liu X."/>
            <person name="Mattei B."/>
            <person name="McIntosh T.C."/>
            <person name="McLeod M.P."/>
            <person name="McPherson D."/>
            <person name="Merkulov G."/>
            <person name="Milshina N.V."/>
            <person name="Mobarry C."/>
            <person name="Morris J."/>
            <person name="Moshrefi A."/>
            <person name="Mount S.M."/>
            <person name="Moy M."/>
            <person name="Murphy B."/>
            <person name="Murphy L."/>
            <person name="Muzny D.M."/>
            <person name="Nelson D.L."/>
            <person name="Nelson D.R."/>
            <person name="Nelson K.A."/>
            <person name="Nixon K."/>
            <person name="Nusskern D.R."/>
            <person name="Pacleb J.M."/>
            <person name="Palazzolo M."/>
            <person name="Pittman G.S."/>
            <person name="Pan S."/>
            <person name="Pollard J."/>
            <person name="Puri V."/>
            <person name="Reese M.G."/>
            <person name="Reinert K."/>
            <person name="Remington K."/>
            <person name="Saunders R.D.C."/>
            <person name="Scheeler F."/>
            <person name="Shen H."/>
            <person name="Shue B.C."/>
            <person name="Siden-Kiamos I."/>
            <person name="Simpson M."/>
            <person name="Skupski M.P."/>
            <person name="Smith T.J."/>
            <person name="Spier E."/>
            <person name="Spradling A.C."/>
            <person name="Stapleton M."/>
            <person name="Strong R."/>
            <person name="Sun E."/>
            <person name="Svirskas R."/>
            <person name="Tector C."/>
            <person name="Turner R."/>
            <person name="Venter E."/>
            <person name="Wang A.H."/>
            <person name="Wang X."/>
            <person name="Wang Z.-Y."/>
            <person name="Wassarman D.A."/>
            <person name="Weinstock G.M."/>
            <person name="Weissenbach J."/>
            <person name="Williams S.M."/>
            <person name="Woodage T."/>
            <person name="Worley K.C."/>
            <person name="Wu D."/>
            <person name="Yang S."/>
            <person name="Yao Q.A."/>
            <person name="Ye J."/>
            <person name="Yeh R.-F."/>
            <person name="Zaveri J.S."/>
            <person name="Zhan M."/>
            <person name="Zhang G."/>
            <person name="Zhao Q."/>
            <person name="Zheng L."/>
            <person name="Zheng X.H."/>
            <person name="Zhong F.N."/>
            <person name="Zhong W."/>
            <person name="Zhou X."/>
            <person name="Zhu S.C."/>
            <person name="Zhu X."/>
            <person name="Smith H.O."/>
            <person name="Gibbs R.A."/>
            <person name="Myers E.W."/>
            <person name="Rubin G.M."/>
            <person name="Venter J.C."/>
        </authorList>
    </citation>
    <scope>NUCLEOTIDE SEQUENCE [LARGE SCALE GENOMIC DNA]</scope>
    <source>
        <strain>Berkeley</strain>
    </source>
</reference>
<reference key="3">
    <citation type="journal article" date="2002" name="Genome Biol.">
        <title>Annotation of the Drosophila melanogaster euchromatic genome: a systematic review.</title>
        <authorList>
            <person name="Misra S."/>
            <person name="Crosby M.A."/>
            <person name="Mungall C.J."/>
            <person name="Matthews B.B."/>
            <person name="Campbell K.S."/>
            <person name="Hradecky P."/>
            <person name="Huang Y."/>
            <person name="Kaminker J.S."/>
            <person name="Millburn G.H."/>
            <person name="Prochnik S.E."/>
            <person name="Smith C.D."/>
            <person name="Tupy J.L."/>
            <person name="Whitfield E.J."/>
            <person name="Bayraktaroglu L."/>
            <person name="Berman B.P."/>
            <person name="Bettencourt B.R."/>
            <person name="Celniker S.E."/>
            <person name="de Grey A.D.N.J."/>
            <person name="Drysdale R.A."/>
            <person name="Harris N.L."/>
            <person name="Richter J."/>
            <person name="Russo S."/>
            <person name="Schroeder A.J."/>
            <person name="Shu S.Q."/>
            <person name="Stapleton M."/>
            <person name="Yamada C."/>
            <person name="Ashburner M."/>
            <person name="Gelbart W.M."/>
            <person name="Rubin G.M."/>
            <person name="Lewis S.E."/>
        </authorList>
    </citation>
    <scope>GENOME REANNOTATION</scope>
    <source>
        <strain>Berkeley</strain>
    </source>
</reference>
<reference key="4">
    <citation type="submission" date="2006-01" db="EMBL/GenBank/DDBJ databases">
        <authorList>
            <person name="Stapleton M."/>
            <person name="Carlson J.W."/>
            <person name="Chavez C."/>
            <person name="Frise E."/>
            <person name="George R.A."/>
            <person name="Pacleb J.M."/>
            <person name="Park S."/>
            <person name="Wan K.H."/>
            <person name="Yu C."/>
            <person name="Celniker S.E."/>
        </authorList>
    </citation>
    <scope>NUCLEOTIDE SEQUENCE [LARGE SCALE MRNA]</scope>
    <source>
        <strain>Berkeley</strain>
    </source>
</reference>
<name>URIC_DROME</name>
<keyword id="KW-0560">Oxidoreductase</keyword>
<keyword id="KW-0576">Peroxisome</keyword>
<keyword id="KW-0659">Purine metabolism</keyword>
<keyword id="KW-1185">Reference proteome</keyword>
<accession>P16163</accession>
<accession>Q29QG8</accession>
<accession>Q9VLX4</accession>
<comment type="function">
    <text evidence="5">Catalyzes the oxidation of uric acid to 5-hydroxyisourate, which is further processed to form (S)-allantoin.</text>
</comment>
<comment type="catalytic activity">
    <reaction>
        <text>urate + O2 + H2O = 5-hydroxyisourate + H2O2</text>
        <dbReference type="Rhea" id="RHEA:21368"/>
        <dbReference type="ChEBI" id="CHEBI:15377"/>
        <dbReference type="ChEBI" id="CHEBI:15379"/>
        <dbReference type="ChEBI" id="CHEBI:16240"/>
        <dbReference type="ChEBI" id="CHEBI:17775"/>
        <dbReference type="ChEBI" id="CHEBI:18072"/>
        <dbReference type="EC" id="1.7.3.3"/>
    </reaction>
</comment>
<comment type="activity regulation">
    <text evidence="5">Repressed by 20-hydroxyecdysone.</text>
</comment>
<comment type="pathway">
    <text>Purine metabolism; urate degradation; (S)-allantoin from urate: step 1/3.</text>
</comment>
<comment type="interaction">
    <interactant intactId="EBI-173238">
        <id>P16163</id>
    </interactant>
    <interactant intactId="EBI-92844">
        <id>Q9VW53</id>
        <label>Mtr3</label>
    </interactant>
    <organismsDiffer>false</organismsDiffer>
    <experiments>4</experiments>
</comment>
<comment type="subcellular location">
    <subcellularLocation>
        <location evidence="5">Peroxisome</location>
    </subcellularLocation>
</comment>
<comment type="tissue specificity">
    <text evidence="5">Malpighian tubules.</text>
</comment>
<comment type="developmental stage">
    <text evidence="5">Third instar larvae and adult.</text>
</comment>
<comment type="similarity">
    <text evidence="6">Belongs to the uricase family.</text>
</comment>
<comment type="sequence caution" evidence="6">
    <conflict type="frameshift">
        <sequence resource="EMBL-CDS" id="ABC86484"/>
    </conflict>
</comment>
<feature type="chain" id="PRO_0000165991" description="Uricase">
    <location>
        <begin position="1"/>
        <end position="352"/>
    </location>
</feature>
<feature type="region of interest" description="Disordered" evidence="4">
    <location>
        <begin position="1"/>
        <end position="32"/>
    </location>
</feature>
<feature type="short sequence motif" description="Microbody targeting signal" evidence="3">
    <location>
        <begin position="350"/>
        <end position="352"/>
    </location>
</feature>
<feature type="compositionally biased region" description="Basic and acidic residues" evidence="4">
    <location>
        <begin position="23"/>
        <end position="32"/>
    </location>
</feature>
<feature type="active site" description="Charge relay system" evidence="1">
    <location>
        <position position="41"/>
    </location>
</feature>
<feature type="active site" description="Charge relay system" evidence="1">
    <location>
        <position position="86"/>
    </location>
</feature>
<feature type="active site" description="Charge relay system" evidence="1">
    <location>
        <position position="308"/>
    </location>
</feature>
<feature type="binding site" evidence="2">
    <location>
        <position position="86"/>
    </location>
    <ligand>
        <name>urate</name>
        <dbReference type="ChEBI" id="CHEBI:17775"/>
    </ligand>
</feature>
<feature type="binding site" evidence="2">
    <location>
        <position position="87"/>
    </location>
    <ligand>
        <name>urate</name>
        <dbReference type="ChEBI" id="CHEBI:17775"/>
    </ligand>
</feature>
<feature type="binding site" evidence="2">
    <location>
        <position position="214"/>
    </location>
    <ligand>
        <name>urate</name>
        <dbReference type="ChEBI" id="CHEBI:17775"/>
    </ligand>
</feature>
<feature type="binding site" evidence="2">
    <location>
        <position position="231"/>
    </location>
    <ligand>
        <name>urate</name>
        <dbReference type="ChEBI" id="CHEBI:17775"/>
    </ligand>
</feature>
<feature type="binding site" evidence="2">
    <location>
        <position position="279"/>
    </location>
    <ligand>
        <name>urate</name>
        <dbReference type="ChEBI" id="CHEBI:17775"/>
    </ligand>
</feature>
<feature type="binding site" evidence="2">
    <location>
        <position position="280"/>
    </location>
    <ligand>
        <name>urate</name>
        <dbReference type="ChEBI" id="CHEBI:17775"/>
    </ligand>
</feature>
<feature type="binding site" evidence="2">
    <location>
        <position position="306"/>
    </location>
    <ligand>
        <name>urate</name>
        <dbReference type="ChEBI" id="CHEBI:17775"/>
    </ligand>
</feature>
<feature type="sequence conflict" description="In Ref. 1; CAA36203." evidence="6" ref="1">
    <original>R</original>
    <variation>K</variation>
    <location>
        <position position="114"/>
    </location>
</feature>
<proteinExistence type="evidence at protein level"/>
<evidence type="ECO:0000250" key="1">
    <source>
        <dbReference type="UniProtKB" id="D0VWQ1"/>
    </source>
</evidence>
<evidence type="ECO:0000250" key="2">
    <source>
        <dbReference type="UniProtKB" id="Q00511"/>
    </source>
</evidence>
<evidence type="ECO:0000255" key="3"/>
<evidence type="ECO:0000256" key="4">
    <source>
        <dbReference type="SAM" id="MobiDB-lite"/>
    </source>
</evidence>
<evidence type="ECO:0000269" key="5">
    <source>
    </source>
</evidence>
<evidence type="ECO:0000305" key="6"/>
<organism>
    <name type="scientific">Drosophila melanogaster</name>
    <name type="common">Fruit fly</name>
    <dbReference type="NCBI Taxonomy" id="7227"/>
    <lineage>
        <taxon>Eukaryota</taxon>
        <taxon>Metazoa</taxon>
        <taxon>Ecdysozoa</taxon>
        <taxon>Arthropoda</taxon>
        <taxon>Hexapoda</taxon>
        <taxon>Insecta</taxon>
        <taxon>Pterygota</taxon>
        <taxon>Neoptera</taxon>
        <taxon>Endopterygota</taxon>
        <taxon>Diptera</taxon>
        <taxon>Brachycera</taxon>
        <taxon>Muscomorpha</taxon>
        <taxon>Ephydroidea</taxon>
        <taxon>Drosophilidae</taxon>
        <taxon>Drosophila</taxon>
        <taxon>Sophophora</taxon>
    </lineage>
</organism>
<gene>
    <name type="primary">Uro</name>
    <name type="synonym">UO</name>
    <name type="ORF">CG7171</name>
</gene>
<protein>
    <recommendedName>
        <fullName>Uricase</fullName>
        <ecNumber>1.7.3.3</ecNumber>
    </recommendedName>
    <alternativeName>
        <fullName>Urate oxidase</fullName>
    </alternativeName>
</protein>